<accession>B2RYH9</accession>
<comment type="subcellular location">
    <subcellularLocation>
        <location evidence="4">Membrane</location>
        <topology evidence="4">Multi-pass membrane protein</topology>
    </subcellularLocation>
</comment>
<comment type="similarity">
    <text evidence="4">Belongs to the major facilitator superfamily.</text>
</comment>
<feature type="chain" id="PRO_0000375849" description="Hippocampus abundant transcript-like protein 1">
    <location>
        <begin position="1"/>
        <end position="507"/>
    </location>
</feature>
<feature type="topological domain" description="Extracellular" evidence="2">
    <location>
        <begin position="1"/>
        <end position="51"/>
    </location>
</feature>
<feature type="transmembrane region" description="Helical" evidence="2">
    <location>
        <begin position="52"/>
        <end position="72"/>
    </location>
</feature>
<feature type="topological domain" description="Cytoplasmic" evidence="2">
    <location>
        <begin position="73"/>
        <end position="84"/>
    </location>
</feature>
<feature type="transmembrane region" description="Helical" evidence="2">
    <location>
        <begin position="85"/>
        <end position="105"/>
    </location>
</feature>
<feature type="topological domain" description="Extracellular" evidence="2">
    <location>
        <begin position="106"/>
        <end position="113"/>
    </location>
</feature>
<feature type="transmembrane region" description="Helical" evidence="2">
    <location>
        <begin position="114"/>
        <end position="134"/>
    </location>
</feature>
<feature type="topological domain" description="Cytoplasmic" evidence="2">
    <location>
        <begin position="135"/>
        <end position="136"/>
    </location>
</feature>
<feature type="transmembrane region" description="Helical" evidence="2">
    <location>
        <begin position="137"/>
        <end position="157"/>
    </location>
</feature>
<feature type="topological domain" description="Extracellular" evidence="2">
    <location>
        <begin position="158"/>
        <end position="170"/>
    </location>
</feature>
<feature type="transmembrane region" description="Helical" evidence="2">
    <location>
        <begin position="171"/>
        <end position="191"/>
    </location>
</feature>
<feature type="topological domain" description="Cytoplasmic" evidence="2">
    <location>
        <begin position="192"/>
        <end position="198"/>
    </location>
</feature>
<feature type="transmembrane region" description="Helical" evidence="2">
    <location>
        <begin position="199"/>
        <end position="219"/>
    </location>
</feature>
<feature type="topological domain" description="Extracellular" evidence="2">
    <location>
        <begin position="220"/>
        <end position="257"/>
    </location>
</feature>
<feature type="transmembrane region" description="Helical" evidence="2">
    <location>
        <begin position="258"/>
        <end position="278"/>
    </location>
</feature>
<feature type="topological domain" description="Cytoplasmic" evidence="2">
    <location>
        <begin position="279"/>
        <end position="283"/>
    </location>
</feature>
<feature type="transmembrane region" description="Helical" evidence="2">
    <location>
        <begin position="284"/>
        <end position="304"/>
    </location>
</feature>
<feature type="topological domain" description="Extracellular" evidence="2">
    <location>
        <begin position="305"/>
        <end position="323"/>
    </location>
</feature>
<feature type="transmembrane region" description="Helical" evidence="2">
    <location>
        <begin position="324"/>
        <end position="344"/>
    </location>
</feature>
<feature type="topological domain" description="Cytoplasmic" evidence="2">
    <location>
        <begin position="345"/>
        <end position="347"/>
    </location>
</feature>
<feature type="transmembrane region" description="Helical" evidence="2">
    <location>
        <begin position="348"/>
        <end position="368"/>
    </location>
</feature>
<feature type="topological domain" description="Extracellular" evidence="2">
    <location>
        <begin position="369"/>
        <end position="389"/>
    </location>
</feature>
<feature type="transmembrane region" description="Helical" evidence="2">
    <location>
        <begin position="390"/>
        <end position="410"/>
    </location>
</feature>
<feature type="topological domain" description="Cytoplasmic" evidence="2">
    <location>
        <begin position="411"/>
        <end position="430"/>
    </location>
</feature>
<feature type="transmembrane region" description="Helical" evidence="2">
    <location>
        <begin position="431"/>
        <end position="451"/>
    </location>
</feature>
<feature type="topological domain" description="Extracellular" evidence="2">
    <location>
        <begin position="452"/>
        <end position="507"/>
    </location>
</feature>
<feature type="region of interest" description="Disordered" evidence="3">
    <location>
        <begin position="1"/>
        <end position="22"/>
    </location>
</feature>
<feature type="region of interest" description="Disordered" evidence="3">
    <location>
        <begin position="462"/>
        <end position="483"/>
    </location>
</feature>
<feature type="compositionally biased region" description="Polar residues" evidence="3">
    <location>
        <begin position="462"/>
        <end position="473"/>
    </location>
</feature>
<feature type="glycosylation site" description="N-linked (GlcNAc...) asparagine" evidence="2">
    <location>
        <position position="464"/>
    </location>
</feature>
<gene>
    <name evidence="5" type="primary">Mfsd14b</name>
    <name evidence="1" type="synonym">Hiatl1</name>
</gene>
<dbReference type="EMBL" id="CH474087">
    <property type="protein sequence ID" value="EDL84449.1"/>
    <property type="molecule type" value="Genomic_DNA"/>
</dbReference>
<dbReference type="EMBL" id="BC166784">
    <property type="protein sequence ID" value="AAI66784.1"/>
    <property type="molecule type" value="mRNA"/>
</dbReference>
<dbReference type="RefSeq" id="NP_001100804.1">
    <property type="nucleotide sequence ID" value="NM_001107334.2"/>
</dbReference>
<dbReference type="SMR" id="B2RYH9"/>
<dbReference type="FunCoup" id="B2RYH9">
    <property type="interactions" value="2565"/>
</dbReference>
<dbReference type="STRING" id="10116.ENSRNOP00000060101"/>
<dbReference type="GlyCosmos" id="B2RYH9">
    <property type="glycosylation" value="1 site, No reported glycans"/>
</dbReference>
<dbReference type="GlyGen" id="B2RYH9">
    <property type="glycosylation" value="1 site"/>
</dbReference>
<dbReference type="PhosphoSitePlus" id="B2RYH9"/>
<dbReference type="PaxDb" id="10116-ENSRNOP00000060101"/>
<dbReference type="PeptideAtlas" id="B2RYH9"/>
<dbReference type="Ensembl" id="ENSRNOT00000067979.4">
    <property type="protein sequence ID" value="ENSRNOP00000060101.2"/>
    <property type="gene ID" value="ENSRNOG00000018227.8"/>
</dbReference>
<dbReference type="GeneID" id="306687"/>
<dbReference type="KEGG" id="rno:306687"/>
<dbReference type="UCSC" id="RGD:1308377">
    <property type="organism name" value="rat"/>
</dbReference>
<dbReference type="AGR" id="RGD:1308377"/>
<dbReference type="CTD" id="84641"/>
<dbReference type="RGD" id="1308377">
    <property type="gene designation" value="Mfsd14b"/>
</dbReference>
<dbReference type="eggNOG" id="KOG2816">
    <property type="taxonomic scope" value="Eukaryota"/>
</dbReference>
<dbReference type="GeneTree" id="ENSGT00940000156081"/>
<dbReference type="HOGENOM" id="CLU_001265_10_5_1"/>
<dbReference type="InParanoid" id="B2RYH9"/>
<dbReference type="OMA" id="LELMWYG"/>
<dbReference type="OrthoDB" id="419616at2759"/>
<dbReference type="PhylomeDB" id="B2RYH9"/>
<dbReference type="PRO" id="PR:B2RYH9"/>
<dbReference type="Proteomes" id="UP000002494">
    <property type="component" value="Chromosome 17"/>
</dbReference>
<dbReference type="Proteomes" id="UP000234681">
    <property type="component" value="Chromosome 17"/>
</dbReference>
<dbReference type="Bgee" id="ENSRNOG00000018227">
    <property type="expression patterns" value="Expressed in jejunum and 19 other cell types or tissues"/>
</dbReference>
<dbReference type="GO" id="GO:0016020">
    <property type="term" value="C:membrane"/>
    <property type="evidence" value="ECO:0007669"/>
    <property type="project" value="UniProtKB-SubCell"/>
</dbReference>
<dbReference type="GO" id="GO:0022857">
    <property type="term" value="F:transmembrane transporter activity"/>
    <property type="evidence" value="ECO:0007669"/>
    <property type="project" value="InterPro"/>
</dbReference>
<dbReference type="CDD" id="cd17387">
    <property type="entry name" value="MFS_MFSD14"/>
    <property type="match status" value="1"/>
</dbReference>
<dbReference type="Gene3D" id="1.20.1250.20">
    <property type="entry name" value="MFS general substrate transporter like domains"/>
    <property type="match status" value="1"/>
</dbReference>
<dbReference type="InterPro" id="IPR011701">
    <property type="entry name" value="MFS"/>
</dbReference>
<dbReference type="InterPro" id="IPR020846">
    <property type="entry name" value="MFS_dom"/>
</dbReference>
<dbReference type="InterPro" id="IPR036259">
    <property type="entry name" value="MFS_trans_sf"/>
</dbReference>
<dbReference type="InterPro" id="IPR005829">
    <property type="entry name" value="Sugar_transporter_CS"/>
</dbReference>
<dbReference type="InterPro" id="IPR001958">
    <property type="entry name" value="Tet-R_TetA/multi-R_MdtG-like"/>
</dbReference>
<dbReference type="PANTHER" id="PTHR23504:SF32">
    <property type="entry name" value="HIPPOCAMPUS ABUNDANT TRANSCRIPT-LIKE PROTEIN 1"/>
    <property type="match status" value="1"/>
</dbReference>
<dbReference type="PANTHER" id="PTHR23504">
    <property type="entry name" value="MAJOR FACILITATOR SUPERFAMILY DOMAIN-CONTAINING PROTEIN 10"/>
    <property type="match status" value="1"/>
</dbReference>
<dbReference type="Pfam" id="PF07690">
    <property type="entry name" value="MFS_1"/>
    <property type="match status" value="1"/>
</dbReference>
<dbReference type="PRINTS" id="PR01035">
    <property type="entry name" value="TCRTETA"/>
</dbReference>
<dbReference type="SUPFAM" id="SSF103473">
    <property type="entry name" value="MFS general substrate transporter"/>
    <property type="match status" value="1"/>
</dbReference>
<dbReference type="PROSITE" id="PS50850">
    <property type="entry name" value="MFS"/>
    <property type="match status" value="1"/>
</dbReference>
<dbReference type="PROSITE" id="PS00216">
    <property type="entry name" value="SUGAR_TRANSPORT_1"/>
    <property type="match status" value="1"/>
</dbReference>
<organism>
    <name type="scientific">Rattus norvegicus</name>
    <name type="common">Rat</name>
    <dbReference type="NCBI Taxonomy" id="10116"/>
    <lineage>
        <taxon>Eukaryota</taxon>
        <taxon>Metazoa</taxon>
        <taxon>Chordata</taxon>
        <taxon>Craniata</taxon>
        <taxon>Vertebrata</taxon>
        <taxon>Euteleostomi</taxon>
        <taxon>Mammalia</taxon>
        <taxon>Eutheria</taxon>
        <taxon>Euarchontoglires</taxon>
        <taxon>Glires</taxon>
        <taxon>Rodentia</taxon>
        <taxon>Myomorpha</taxon>
        <taxon>Muroidea</taxon>
        <taxon>Muridae</taxon>
        <taxon>Murinae</taxon>
        <taxon>Rattus</taxon>
    </lineage>
</organism>
<proteinExistence type="evidence at transcript level"/>
<name>MF14B_RAT</name>
<evidence type="ECO:0000250" key="1">
    <source>
        <dbReference type="UniProtKB" id="Q5SR56"/>
    </source>
</evidence>
<evidence type="ECO:0000255" key="2"/>
<evidence type="ECO:0000256" key="3">
    <source>
        <dbReference type="SAM" id="MobiDB-lite"/>
    </source>
</evidence>
<evidence type="ECO:0000305" key="4"/>
<evidence type="ECO:0000312" key="5">
    <source>
        <dbReference type="RGD" id="1308377"/>
    </source>
</evidence>
<reference key="1">
    <citation type="submission" date="2005-07" db="EMBL/GenBank/DDBJ databases">
        <authorList>
            <person name="Mural R.J."/>
            <person name="Adams M.D."/>
            <person name="Myers E.W."/>
            <person name="Smith H.O."/>
            <person name="Venter J.C."/>
        </authorList>
    </citation>
    <scope>NUCLEOTIDE SEQUENCE [LARGE SCALE GENOMIC DNA]</scope>
</reference>
<reference key="2">
    <citation type="journal article" date="2004" name="Genome Res.">
        <title>The status, quality, and expansion of the NIH full-length cDNA project: the Mammalian Gene Collection (MGC).</title>
        <authorList>
            <consortium name="The MGC Project Team"/>
        </authorList>
    </citation>
    <scope>NUCLEOTIDE SEQUENCE [LARGE SCALE MRNA]</scope>
    <source>
        <tissue>Prostate</tissue>
    </source>
</reference>
<keyword id="KW-0325">Glycoprotein</keyword>
<keyword id="KW-0472">Membrane</keyword>
<keyword id="KW-1185">Reference proteome</keyword>
<keyword id="KW-0812">Transmembrane</keyword>
<keyword id="KW-1133">Transmembrane helix</keyword>
<keyword id="KW-0813">Transport</keyword>
<protein>
    <recommendedName>
        <fullName evidence="1">Hippocampus abundant transcript-like protein 1</fullName>
    </recommendedName>
    <alternativeName>
        <fullName evidence="5">Major facilitator superfamily domain-containing 14B</fullName>
    </alternativeName>
</protein>
<sequence>MSTDGESPEEPGWKAVASPKASAMPEKRGSAQAASSSWLQGFGQPSVYHAAFVIFFEFFAWGLLTTPMLTVLHETFPQHTFLMNGLIQGVKGLLSFLSAPLIGALSDVWGRKPFLLGTVFFTCFPIPLMRISPWWYFGMISVSGVFSVTFSVIFAYVADFTQEHERSTAYGWVSATFAASLVSSPAIGTYLSSNYGDSLVVLVATVVALLDICFILVAVPESLPEKIRPASWGAQISWKQADPFASLKKVGKDSTVLLICITVFLSYLPEAGQYSSFFLYLRQVIGFGSVKIVAFIAMVGILSILAQTVFLSKLMRSLGNKNTVLLGLGFQILQLAWYGFGAQAWMMWAAGTVAAMSSITFPAVSALISRNAESDQQGVAQGIITGIRGLCNGLGPALYGFIFYLFHVELNELGPKLDSDNDPLQGAFIPGPPFLFGACIVLMSFLVALFIPEYRKTGGVQKHNNSISGSLSTPPERGSDEDIEPLLQDSNIWELSSEEPGNQCTEL</sequence>